<feature type="chain" id="PRO_0000209300" description="UPF0250 protein HI_0028">
    <location>
        <begin position="1"/>
        <end position="92"/>
    </location>
</feature>
<evidence type="ECO:0000305" key="1"/>
<gene>
    <name type="ordered locus">HI_0028</name>
</gene>
<reference key="1">
    <citation type="journal article" date="1995" name="Science">
        <title>Whole-genome random sequencing and assembly of Haemophilus influenzae Rd.</title>
        <authorList>
            <person name="Fleischmann R.D."/>
            <person name="Adams M.D."/>
            <person name="White O."/>
            <person name="Clayton R.A."/>
            <person name="Kirkness E.F."/>
            <person name="Kerlavage A.R."/>
            <person name="Bult C.J."/>
            <person name="Tomb J.-F."/>
            <person name="Dougherty B.A."/>
            <person name="Merrick J.M."/>
            <person name="McKenney K."/>
            <person name="Sutton G.G."/>
            <person name="FitzHugh W."/>
            <person name="Fields C.A."/>
            <person name="Gocayne J.D."/>
            <person name="Scott J.D."/>
            <person name="Shirley R."/>
            <person name="Liu L.-I."/>
            <person name="Glodek A."/>
            <person name="Kelley J.M."/>
            <person name="Weidman J.F."/>
            <person name="Phillips C.A."/>
            <person name="Spriggs T."/>
            <person name="Hedblom E."/>
            <person name="Cotton M.D."/>
            <person name="Utterback T.R."/>
            <person name="Hanna M.C."/>
            <person name="Nguyen D.T."/>
            <person name="Saudek D.M."/>
            <person name="Brandon R.C."/>
            <person name="Fine L.D."/>
            <person name="Fritchman J.L."/>
            <person name="Fuhrmann J.L."/>
            <person name="Geoghagen N.S.M."/>
            <person name="Gnehm C.L."/>
            <person name="McDonald L.A."/>
            <person name="Small K.V."/>
            <person name="Fraser C.M."/>
            <person name="Smith H.O."/>
            <person name="Venter J.C."/>
        </authorList>
    </citation>
    <scope>NUCLEOTIDE SEQUENCE [LARGE SCALE GENOMIC DNA]</scope>
    <source>
        <strain>ATCC 51907 / DSM 11121 / KW20 / Rd</strain>
    </source>
</reference>
<reference key="2">
    <citation type="journal article" date="1998" name="Electrophoresis">
        <title>Reference map of the low molecular mass proteins of Haemophilus influenzae.</title>
        <authorList>
            <person name="Fountoulakis M."/>
            <person name="Juranville J.-F."/>
            <person name="Roeder D."/>
            <person name="Evers S."/>
            <person name="Berndt P."/>
            <person name="Langen H."/>
        </authorList>
    </citation>
    <scope>IDENTIFICATION BY MASS SPECTROMETRY</scope>
    <source>
        <strain>ATCC 51907 / DSM 11121 / KW20 / Rd</strain>
    </source>
</reference>
<reference key="3">
    <citation type="journal article" date="2000" name="Electrophoresis">
        <title>Two-dimensional map of the proteome of Haemophilus influenzae.</title>
        <authorList>
            <person name="Langen H."/>
            <person name="Takacs B."/>
            <person name="Evers S."/>
            <person name="Berndt P."/>
            <person name="Lahm H.W."/>
            <person name="Wipf B."/>
            <person name="Gray C."/>
            <person name="Fountoulakis M."/>
        </authorList>
    </citation>
    <scope>IDENTIFICATION BY MASS SPECTROMETRY</scope>
    <source>
        <strain>ATCC 51907 / DSM 11121 / KW20 / Rd</strain>
    </source>
</reference>
<proteinExistence type="evidence at protein level"/>
<name>Y028_HAEIN</name>
<comment type="similarity">
    <text evidence="1">Belongs to the UPF0250 family.</text>
</comment>
<keyword id="KW-1185">Reference proteome</keyword>
<accession>P44465</accession>
<organism>
    <name type="scientific">Haemophilus influenzae (strain ATCC 51907 / DSM 11121 / KW20 / Rd)</name>
    <dbReference type="NCBI Taxonomy" id="71421"/>
    <lineage>
        <taxon>Bacteria</taxon>
        <taxon>Pseudomonadati</taxon>
        <taxon>Pseudomonadota</taxon>
        <taxon>Gammaproteobacteria</taxon>
        <taxon>Pasteurellales</taxon>
        <taxon>Pasteurellaceae</taxon>
        <taxon>Haemophilus</taxon>
    </lineage>
</organism>
<protein>
    <recommendedName>
        <fullName>UPF0250 protein HI_0028</fullName>
    </recommendedName>
</protein>
<sequence>MTIENDYAKLKELMEFPAKMTFKVAGINREGLAQDLIQVVQKYIKGDYIPKEKRSSKGTYNSVSIDIIAENFDQVETLYKELAKVEGVKMVI</sequence>
<dbReference type="EMBL" id="L42023">
    <property type="protein sequence ID" value="AAC21706.1"/>
    <property type="molecule type" value="Genomic_DNA"/>
</dbReference>
<dbReference type="PIR" id="F64140">
    <property type="entry name" value="F64140"/>
</dbReference>
<dbReference type="RefSeq" id="NP_438201.1">
    <property type="nucleotide sequence ID" value="NC_000907.1"/>
</dbReference>
<dbReference type="SMR" id="P44465"/>
<dbReference type="STRING" id="71421.HI_0028"/>
<dbReference type="EnsemblBacteria" id="AAC21706">
    <property type="protein sequence ID" value="AAC21706"/>
    <property type="gene ID" value="HI_0028"/>
</dbReference>
<dbReference type="KEGG" id="hin:HI_0028"/>
<dbReference type="PATRIC" id="fig|71421.8.peg.28"/>
<dbReference type="eggNOG" id="COG2921">
    <property type="taxonomic scope" value="Bacteria"/>
</dbReference>
<dbReference type="HOGENOM" id="CLU_161438_2_1_6"/>
<dbReference type="OrthoDB" id="9793424at2"/>
<dbReference type="PhylomeDB" id="P44465"/>
<dbReference type="BioCyc" id="HINF71421:G1GJ1-28-MONOMER"/>
<dbReference type="Proteomes" id="UP000000579">
    <property type="component" value="Chromosome"/>
</dbReference>
<dbReference type="GO" id="GO:0005829">
    <property type="term" value="C:cytosol"/>
    <property type="evidence" value="ECO:0000318"/>
    <property type="project" value="GO_Central"/>
</dbReference>
<dbReference type="Gene3D" id="3.30.70.260">
    <property type="match status" value="1"/>
</dbReference>
<dbReference type="HAMAP" id="MF_00659">
    <property type="entry name" value="UPF0250"/>
    <property type="match status" value="1"/>
</dbReference>
<dbReference type="InterPro" id="IPR007454">
    <property type="entry name" value="UPF0250_YbeD-like"/>
</dbReference>
<dbReference type="InterPro" id="IPR027471">
    <property type="entry name" value="YbeD-like_sf"/>
</dbReference>
<dbReference type="NCBIfam" id="NF003447">
    <property type="entry name" value="PRK04998.1"/>
    <property type="match status" value="1"/>
</dbReference>
<dbReference type="PANTHER" id="PTHR38036">
    <property type="entry name" value="UPF0250 PROTEIN YBED"/>
    <property type="match status" value="1"/>
</dbReference>
<dbReference type="PANTHER" id="PTHR38036:SF1">
    <property type="entry name" value="UPF0250 PROTEIN YBED"/>
    <property type="match status" value="1"/>
</dbReference>
<dbReference type="Pfam" id="PF04359">
    <property type="entry name" value="DUF493"/>
    <property type="match status" value="1"/>
</dbReference>
<dbReference type="SUPFAM" id="SSF117991">
    <property type="entry name" value="YbeD/HP0495-like"/>
    <property type="match status" value="1"/>
</dbReference>